<comment type="function">
    <text evidence="1">IGPS catalyzes the conversion of PRFAR and glutamine to IGP, AICAR and glutamate. The HisH subunit catalyzes the hydrolysis of glutamine to glutamate and ammonia as part of the synthesis of IGP and AICAR. The resulting ammonia molecule is channeled to the active site of HisF.</text>
</comment>
<comment type="catalytic activity">
    <reaction evidence="1">
        <text>5-[(5-phospho-1-deoxy-D-ribulos-1-ylimino)methylamino]-1-(5-phospho-beta-D-ribosyl)imidazole-4-carboxamide + L-glutamine = D-erythro-1-(imidazol-4-yl)glycerol 3-phosphate + 5-amino-1-(5-phospho-beta-D-ribosyl)imidazole-4-carboxamide + L-glutamate + H(+)</text>
        <dbReference type="Rhea" id="RHEA:24793"/>
        <dbReference type="ChEBI" id="CHEBI:15378"/>
        <dbReference type="ChEBI" id="CHEBI:29985"/>
        <dbReference type="ChEBI" id="CHEBI:58278"/>
        <dbReference type="ChEBI" id="CHEBI:58359"/>
        <dbReference type="ChEBI" id="CHEBI:58475"/>
        <dbReference type="ChEBI" id="CHEBI:58525"/>
        <dbReference type="EC" id="4.3.2.10"/>
    </reaction>
</comment>
<comment type="catalytic activity">
    <reaction evidence="1">
        <text>L-glutamine + H2O = L-glutamate + NH4(+)</text>
        <dbReference type="Rhea" id="RHEA:15889"/>
        <dbReference type="ChEBI" id="CHEBI:15377"/>
        <dbReference type="ChEBI" id="CHEBI:28938"/>
        <dbReference type="ChEBI" id="CHEBI:29985"/>
        <dbReference type="ChEBI" id="CHEBI:58359"/>
        <dbReference type="EC" id="3.5.1.2"/>
    </reaction>
</comment>
<comment type="pathway">
    <text evidence="1">Amino-acid biosynthesis; L-histidine biosynthesis; L-histidine from 5-phospho-alpha-D-ribose 1-diphosphate: step 5/9.</text>
</comment>
<comment type="subunit">
    <text evidence="1">Heterodimer of HisH and HisF.</text>
</comment>
<comment type="subcellular location">
    <subcellularLocation>
        <location evidence="1">Cytoplasm</location>
    </subcellularLocation>
</comment>
<sequence>MIGIIDYGMGNLYSVSKALERLRYEYIISDDPKELKNAKGLILPGVGSFKDAMHILRETGLAKFVCEAVNEGTPLLGICLGMQLLFDESEENGLTEGLGLLSGRVVRIPGVTADGNRYKVPHMGWNRLVFRHPSPLLQNVEEGHVYFVHSYYVVTDDDDVVLASSFYNVEVPAVVGKGNVYGTQFHPEKSGEIGMKILQNYASIIEGKGSM</sequence>
<gene>
    <name evidence="1" type="primary">hisH</name>
    <name type="ordered locus">GWCH70_2977</name>
</gene>
<proteinExistence type="inferred from homology"/>
<organism>
    <name type="scientific">Geobacillus sp. (strain WCH70)</name>
    <dbReference type="NCBI Taxonomy" id="471223"/>
    <lineage>
        <taxon>Bacteria</taxon>
        <taxon>Bacillati</taxon>
        <taxon>Bacillota</taxon>
        <taxon>Bacilli</taxon>
        <taxon>Bacillales</taxon>
        <taxon>Anoxybacillaceae</taxon>
        <taxon>Geobacillus</taxon>
    </lineage>
</organism>
<feature type="chain" id="PRO_1000204803" description="Imidazole glycerol phosphate synthase subunit HisH">
    <location>
        <begin position="1"/>
        <end position="211"/>
    </location>
</feature>
<feature type="domain" description="Glutamine amidotransferase type-1" evidence="1">
    <location>
        <begin position="1"/>
        <end position="211"/>
    </location>
</feature>
<feature type="active site" description="Nucleophile" evidence="1">
    <location>
        <position position="79"/>
    </location>
</feature>
<feature type="active site" evidence="1">
    <location>
        <position position="186"/>
    </location>
</feature>
<feature type="active site" evidence="1">
    <location>
        <position position="188"/>
    </location>
</feature>
<dbReference type="EC" id="4.3.2.10" evidence="1"/>
<dbReference type="EC" id="3.5.1.2" evidence="1"/>
<dbReference type="EMBL" id="CP001638">
    <property type="protein sequence ID" value="ACS25650.1"/>
    <property type="molecule type" value="Genomic_DNA"/>
</dbReference>
<dbReference type="SMR" id="C5D7P0"/>
<dbReference type="STRING" id="471223.GWCH70_2977"/>
<dbReference type="KEGG" id="gwc:GWCH70_2977"/>
<dbReference type="eggNOG" id="COG0118">
    <property type="taxonomic scope" value="Bacteria"/>
</dbReference>
<dbReference type="HOGENOM" id="CLU_071837_2_2_9"/>
<dbReference type="OrthoDB" id="9807137at2"/>
<dbReference type="UniPathway" id="UPA00031">
    <property type="reaction ID" value="UER00010"/>
</dbReference>
<dbReference type="GO" id="GO:0005737">
    <property type="term" value="C:cytoplasm"/>
    <property type="evidence" value="ECO:0007669"/>
    <property type="project" value="UniProtKB-SubCell"/>
</dbReference>
<dbReference type="GO" id="GO:0004359">
    <property type="term" value="F:glutaminase activity"/>
    <property type="evidence" value="ECO:0007669"/>
    <property type="project" value="UniProtKB-EC"/>
</dbReference>
<dbReference type="GO" id="GO:0000107">
    <property type="term" value="F:imidazoleglycerol-phosphate synthase activity"/>
    <property type="evidence" value="ECO:0007669"/>
    <property type="project" value="UniProtKB-UniRule"/>
</dbReference>
<dbReference type="GO" id="GO:0016829">
    <property type="term" value="F:lyase activity"/>
    <property type="evidence" value="ECO:0007669"/>
    <property type="project" value="UniProtKB-KW"/>
</dbReference>
<dbReference type="GO" id="GO:0000105">
    <property type="term" value="P:L-histidine biosynthetic process"/>
    <property type="evidence" value="ECO:0007669"/>
    <property type="project" value="UniProtKB-UniRule"/>
</dbReference>
<dbReference type="CDD" id="cd01748">
    <property type="entry name" value="GATase1_IGP_Synthase"/>
    <property type="match status" value="1"/>
</dbReference>
<dbReference type="Gene3D" id="3.40.50.880">
    <property type="match status" value="1"/>
</dbReference>
<dbReference type="HAMAP" id="MF_00278">
    <property type="entry name" value="HisH"/>
    <property type="match status" value="1"/>
</dbReference>
<dbReference type="InterPro" id="IPR029062">
    <property type="entry name" value="Class_I_gatase-like"/>
</dbReference>
<dbReference type="InterPro" id="IPR017926">
    <property type="entry name" value="GATASE"/>
</dbReference>
<dbReference type="InterPro" id="IPR010139">
    <property type="entry name" value="Imidazole-glycPsynth_HisH"/>
</dbReference>
<dbReference type="NCBIfam" id="TIGR01855">
    <property type="entry name" value="IMP_synth_hisH"/>
    <property type="match status" value="1"/>
</dbReference>
<dbReference type="PANTHER" id="PTHR42701">
    <property type="entry name" value="IMIDAZOLE GLYCEROL PHOSPHATE SYNTHASE SUBUNIT HISH"/>
    <property type="match status" value="1"/>
</dbReference>
<dbReference type="PANTHER" id="PTHR42701:SF1">
    <property type="entry name" value="IMIDAZOLE GLYCEROL PHOSPHATE SYNTHASE SUBUNIT HISH"/>
    <property type="match status" value="1"/>
</dbReference>
<dbReference type="Pfam" id="PF00117">
    <property type="entry name" value="GATase"/>
    <property type="match status" value="1"/>
</dbReference>
<dbReference type="PIRSF" id="PIRSF000495">
    <property type="entry name" value="Amidotransf_hisH"/>
    <property type="match status" value="1"/>
</dbReference>
<dbReference type="SUPFAM" id="SSF52317">
    <property type="entry name" value="Class I glutamine amidotransferase-like"/>
    <property type="match status" value="1"/>
</dbReference>
<dbReference type="PROSITE" id="PS51273">
    <property type="entry name" value="GATASE_TYPE_1"/>
    <property type="match status" value="1"/>
</dbReference>
<keyword id="KW-0028">Amino-acid biosynthesis</keyword>
<keyword id="KW-0963">Cytoplasm</keyword>
<keyword id="KW-0315">Glutamine amidotransferase</keyword>
<keyword id="KW-0368">Histidine biosynthesis</keyword>
<keyword id="KW-0378">Hydrolase</keyword>
<keyword id="KW-0456">Lyase</keyword>
<protein>
    <recommendedName>
        <fullName evidence="1">Imidazole glycerol phosphate synthase subunit HisH</fullName>
        <ecNumber evidence="1">4.3.2.10</ecNumber>
    </recommendedName>
    <alternativeName>
        <fullName evidence="1">IGP synthase glutaminase subunit</fullName>
        <ecNumber evidence="1">3.5.1.2</ecNumber>
    </alternativeName>
    <alternativeName>
        <fullName evidence="1">IGP synthase subunit HisH</fullName>
    </alternativeName>
    <alternativeName>
        <fullName evidence="1">ImGP synthase subunit HisH</fullName>
        <shortName evidence="1">IGPS subunit HisH</shortName>
    </alternativeName>
</protein>
<evidence type="ECO:0000255" key="1">
    <source>
        <dbReference type="HAMAP-Rule" id="MF_00278"/>
    </source>
</evidence>
<reference key="1">
    <citation type="submission" date="2009-06" db="EMBL/GenBank/DDBJ databases">
        <title>Complete sequence of chromosome of Geopacillus sp. WCH70.</title>
        <authorList>
            <consortium name="US DOE Joint Genome Institute"/>
            <person name="Lucas S."/>
            <person name="Copeland A."/>
            <person name="Lapidus A."/>
            <person name="Glavina del Rio T."/>
            <person name="Dalin E."/>
            <person name="Tice H."/>
            <person name="Bruce D."/>
            <person name="Goodwin L."/>
            <person name="Pitluck S."/>
            <person name="Chertkov O."/>
            <person name="Brettin T."/>
            <person name="Detter J.C."/>
            <person name="Han C."/>
            <person name="Larimer F."/>
            <person name="Land M."/>
            <person name="Hauser L."/>
            <person name="Kyrpides N."/>
            <person name="Mikhailova N."/>
            <person name="Brumm P."/>
            <person name="Mead D.A."/>
            <person name="Richardson P."/>
        </authorList>
    </citation>
    <scope>NUCLEOTIDE SEQUENCE [LARGE SCALE GENOMIC DNA]</scope>
    <source>
        <strain>WCH70</strain>
    </source>
</reference>
<name>HIS5_GEOSW</name>
<accession>C5D7P0</accession>